<reference key="1">
    <citation type="journal article" date="2008" name="Cell. Mol. Life Sci.">
        <title>Molecular diversity and evolution of cystine knot toxins of the tarantula Chilobrachys jingzhao.</title>
        <authorList>
            <person name="Chen J."/>
            <person name="Deng M."/>
            <person name="He Q."/>
            <person name="Meng E."/>
            <person name="Jiang L."/>
            <person name="Liao Z."/>
            <person name="Rong M."/>
            <person name="Liang S."/>
        </authorList>
    </citation>
    <scope>NUCLEOTIDE SEQUENCE [LARGE SCALE MRNA]</scope>
    <source>
        <tissue>Venom gland</tissue>
    </source>
</reference>
<reference key="2">
    <citation type="journal article" date="2007" name="Proteomics">
        <title>Proteomic and peptidomic analysis of the venom from Chinese tarantula Chilobrachys jingzhao.</title>
        <authorList>
            <person name="Liao Z."/>
            <person name="Cao J."/>
            <person name="Li S."/>
            <person name="Yan X."/>
            <person name="Hu W."/>
            <person name="He Q."/>
            <person name="Chen J."/>
            <person name="Tang J."/>
            <person name="Xie J."/>
            <person name="Liang S."/>
        </authorList>
    </citation>
    <scope>PROTEIN SEQUENCE OF 48-82</scope>
    <scope>MASS SPECTROMETRY</scope>
    <scope>AMIDATION AT VAL-82</scope>
    <scope>SUBCELLULAR LOCATION</scope>
    <source>
        <tissue>Venom</tissue>
    </source>
</reference>
<accession>B1P1G1</accession>
<dbReference type="EMBL" id="EU233892">
    <property type="protein sequence ID" value="ABY71711.1"/>
    <property type="molecule type" value="mRNA"/>
</dbReference>
<dbReference type="SMR" id="B1P1G1"/>
<dbReference type="ArachnoServer" id="AS000839">
    <property type="toxin name" value="U21-theraphotoxin-Cg1a"/>
</dbReference>
<dbReference type="GO" id="GO:0005576">
    <property type="term" value="C:extracellular region"/>
    <property type="evidence" value="ECO:0007669"/>
    <property type="project" value="UniProtKB-SubCell"/>
</dbReference>
<dbReference type="GO" id="GO:0008200">
    <property type="term" value="F:ion channel inhibitor activity"/>
    <property type="evidence" value="ECO:0007669"/>
    <property type="project" value="InterPro"/>
</dbReference>
<dbReference type="GO" id="GO:0090729">
    <property type="term" value="F:toxin activity"/>
    <property type="evidence" value="ECO:0007669"/>
    <property type="project" value="UniProtKB-KW"/>
</dbReference>
<dbReference type="InterPro" id="IPR011696">
    <property type="entry name" value="Huwentoxin-1"/>
</dbReference>
<dbReference type="Pfam" id="PF07740">
    <property type="entry name" value="Toxin_12"/>
    <property type="match status" value="1"/>
</dbReference>
<dbReference type="SUPFAM" id="SSF57059">
    <property type="entry name" value="omega toxin-like"/>
    <property type="match status" value="1"/>
</dbReference>
<comment type="function">
    <text>Probable ion channel inhibitor.</text>
</comment>
<comment type="subcellular location">
    <subcellularLocation>
        <location evidence="4">Secreted</location>
    </subcellularLocation>
</comment>
<comment type="tissue specificity">
    <text evidence="6">Expressed by the venom gland.</text>
</comment>
<comment type="domain">
    <text evidence="2">The presence of a 'disulfide through disulfide knot' structurally defines this protein as a knottin.</text>
</comment>
<comment type="mass spectrometry">
    <text>Monoisotopic mass.</text>
</comment>
<comment type="similarity">
    <text evidence="5">Belongs to the neurotoxin 10 (Hwtx-1) family. 05 (F4a) subfamily.</text>
</comment>
<evidence type="ECO:0000250" key="1"/>
<evidence type="ECO:0000250" key="2">
    <source>
        <dbReference type="UniProtKB" id="P0C247"/>
    </source>
</evidence>
<evidence type="ECO:0000255" key="3"/>
<evidence type="ECO:0000269" key="4">
    <source>
    </source>
</evidence>
<evidence type="ECO:0000305" key="5"/>
<evidence type="ECO:0000305" key="6">
    <source>
    </source>
</evidence>
<organism>
    <name type="scientific">Chilobrachys guangxiensis</name>
    <name type="common">Chinese earth tiger tarantula</name>
    <name type="synonym">Chilobrachys jingzhao</name>
    <dbReference type="NCBI Taxonomy" id="278060"/>
    <lineage>
        <taxon>Eukaryota</taxon>
        <taxon>Metazoa</taxon>
        <taxon>Ecdysozoa</taxon>
        <taxon>Arthropoda</taxon>
        <taxon>Chelicerata</taxon>
        <taxon>Arachnida</taxon>
        <taxon>Araneae</taxon>
        <taxon>Mygalomorphae</taxon>
        <taxon>Theraphosidae</taxon>
        <taxon>Chilobrachys</taxon>
    </lineage>
</organism>
<name>JZ38D_CHIGU</name>
<keyword id="KW-0027">Amidation</keyword>
<keyword id="KW-0903">Direct protein sequencing</keyword>
<keyword id="KW-1015">Disulfide bond</keyword>
<keyword id="KW-0872">Ion channel impairing toxin</keyword>
<keyword id="KW-0960">Knottin</keyword>
<keyword id="KW-0964">Secreted</keyword>
<keyword id="KW-0732">Signal</keyword>
<keyword id="KW-0800">Toxin</keyword>
<feature type="signal peptide" evidence="3">
    <location>
        <begin position="1"/>
        <end position="21"/>
    </location>
</feature>
<feature type="propeptide" id="PRO_0000398485" evidence="1">
    <location>
        <begin position="22"/>
        <end position="48"/>
    </location>
</feature>
<feature type="peptide" id="PRO_0000398486" description="U21-theraphotoxin-Cg1a 4" evidence="4">
    <location>
        <begin position="48"/>
        <end position="82"/>
    </location>
</feature>
<feature type="propeptide" id="PRO_0000398487">
    <location>
        <begin position="83"/>
        <end position="105"/>
    </location>
</feature>
<feature type="modified residue" description="Valine amide" evidence="4">
    <location>
        <position position="82"/>
    </location>
</feature>
<feature type="disulfide bond" evidence="2">
    <location>
        <begin position="49"/>
        <end position="63"/>
    </location>
</feature>
<feature type="disulfide bond" evidence="2">
    <location>
        <begin position="56"/>
        <end position="68"/>
    </location>
</feature>
<feature type="disulfide bond" evidence="2">
    <location>
        <begin position="62"/>
        <end position="76"/>
    </location>
</feature>
<sequence>MKVSVLITLAVLGVMFLLTSAEERGSDQMDSPAWLKSMEIIFQSEERECRWLFGGCEKDSDCCEHLGCRRAKPSWCGWDFTVGKWEMLINMNIFRIVFSYSMCTV</sequence>
<protein>
    <recommendedName>
        <fullName>U21-theraphotoxin-Cg1a 4</fullName>
        <shortName>U21-TRTX-Cg1a</shortName>
    </recommendedName>
    <alternativeName>
        <fullName>Jingzhaotoxin-38.4</fullName>
        <shortName>JZTX-38.4</shortName>
    </alternativeName>
    <alternativeName>
        <fullName>Peptide F4-25.19</fullName>
    </alternativeName>
</protein>
<proteinExistence type="evidence at protein level"/>